<reference key="1">
    <citation type="submission" date="2008-06" db="EMBL/GenBank/DDBJ databases">
        <title>Complete sequence of chromosome of Prosthecochloris aestuarii DSM 271.</title>
        <authorList>
            <consortium name="US DOE Joint Genome Institute"/>
            <person name="Lucas S."/>
            <person name="Copeland A."/>
            <person name="Lapidus A."/>
            <person name="Glavina del Rio T."/>
            <person name="Dalin E."/>
            <person name="Tice H."/>
            <person name="Bruce D."/>
            <person name="Goodwin L."/>
            <person name="Pitluck S."/>
            <person name="Schmutz J."/>
            <person name="Larimer F."/>
            <person name="Land M."/>
            <person name="Hauser L."/>
            <person name="Kyrpides N."/>
            <person name="Anderson I."/>
            <person name="Liu Z."/>
            <person name="Li T."/>
            <person name="Zhao F."/>
            <person name="Overmann J."/>
            <person name="Bryant D.A."/>
            <person name="Richardson P."/>
        </authorList>
    </citation>
    <scope>NUCLEOTIDE SEQUENCE [LARGE SCALE GENOMIC DNA]</scope>
    <source>
        <strain>DSM 271 / SK 413</strain>
    </source>
</reference>
<protein>
    <recommendedName>
        <fullName evidence="1">Protease HtpX homolog</fullName>
        <ecNumber evidence="1">3.4.24.-</ecNumber>
    </recommendedName>
</protein>
<comment type="cofactor">
    <cofactor evidence="1">
        <name>Zn(2+)</name>
        <dbReference type="ChEBI" id="CHEBI:29105"/>
    </cofactor>
    <text evidence="1">Binds 1 zinc ion per subunit.</text>
</comment>
<comment type="subcellular location">
    <subcellularLocation>
        <location evidence="1">Cell inner membrane</location>
        <topology evidence="1">Multi-pass membrane protein</topology>
    </subcellularLocation>
</comment>
<comment type="similarity">
    <text evidence="1">Belongs to the peptidase M48B family.</text>
</comment>
<accession>B4S7I8</accession>
<evidence type="ECO:0000255" key="1">
    <source>
        <dbReference type="HAMAP-Rule" id="MF_00188"/>
    </source>
</evidence>
<name>HTPX_PROA2</name>
<sequence>MKRIVLFLLTNFAVILVLSISARLLGVDRFLTSNGLNMGMLLAFAALIGFGGSFISLMMSKTMAKWSTGARVIERPGNQDEAWLMDTVRQLSKKAGFPMPEVAVFDGAPNAFATGPSKSKSLVAVSTGLLQSMNRKEVEAVLAHEVAHIQNGDMVTLTLIQGVVNTFVIFLARALAYVVDNFLRGDEKESSGPGIGYWVSSIAFEIMFGILASIVVMFFSRKREYRADAGAAALMGERRSMIDALRVLGGLEAGALPKEMAASGIAGGGMMALFSSHPPIEARIAALESAR</sequence>
<proteinExistence type="inferred from homology"/>
<dbReference type="EC" id="3.4.24.-" evidence="1"/>
<dbReference type="EMBL" id="CP001108">
    <property type="protein sequence ID" value="ACF46025.1"/>
    <property type="molecule type" value="Genomic_DNA"/>
</dbReference>
<dbReference type="RefSeq" id="WP_012505562.1">
    <property type="nucleotide sequence ID" value="NC_011059.1"/>
</dbReference>
<dbReference type="SMR" id="B4S7I8"/>
<dbReference type="STRING" id="290512.Paes_0986"/>
<dbReference type="MEROPS" id="M48.002"/>
<dbReference type="KEGG" id="paa:Paes_0986"/>
<dbReference type="eggNOG" id="COG0501">
    <property type="taxonomic scope" value="Bacteria"/>
</dbReference>
<dbReference type="HOGENOM" id="CLU_042266_1_0_10"/>
<dbReference type="Proteomes" id="UP000002725">
    <property type="component" value="Chromosome"/>
</dbReference>
<dbReference type="GO" id="GO:0005886">
    <property type="term" value="C:plasma membrane"/>
    <property type="evidence" value="ECO:0007669"/>
    <property type="project" value="UniProtKB-SubCell"/>
</dbReference>
<dbReference type="GO" id="GO:0004222">
    <property type="term" value="F:metalloendopeptidase activity"/>
    <property type="evidence" value="ECO:0007669"/>
    <property type="project" value="UniProtKB-UniRule"/>
</dbReference>
<dbReference type="GO" id="GO:0008270">
    <property type="term" value="F:zinc ion binding"/>
    <property type="evidence" value="ECO:0007669"/>
    <property type="project" value="UniProtKB-UniRule"/>
</dbReference>
<dbReference type="GO" id="GO:0006508">
    <property type="term" value="P:proteolysis"/>
    <property type="evidence" value="ECO:0007669"/>
    <property type="project" value="UniProtKB-KW"/>
</dbReference>
<dbReference type="CDD" id="cd07335">
    <property type="entry name" value="M48B_HtpX_like"/>
    <property type="match status" value="1"/>
</dbReference>
<dbReference type="Gene3D" id="3.30.2010.10">
    <property type="entry name" value="Metalloproteases ('zincins'), catalytic domain"/>
    <property type="match status" value="1"/>
</dbReference>
<dbReference type="HAMAP" id="MF_00188">
    <property type="entry name" value="Pept_M48_protease_HtpX"/>
    <property type="match status" value="1"/>
</dbReference>
<dbReference type="InterPro" id="IPR050083">
    <property type="entry name" value="HtpX_protease"/>
</dbReference>
<dbReference type="InterPro" id="IPR022919">
    <property type="entry name" value="Pept_M48_protease_HtpX"/>
</dbReference>
<dbReference type="InterPro" id="IPR001915">
    <property type="entry name" value="Peptidase_M48"/>
</dbReference>
<dbReference type="NCBIfam" id="NF003965">
    <property type="entry name" value="PRK05457.1"/>
    <property type="match status" value="1"/>
</dbReference>
<dbReference type="PANTHER" id="PTHR43221">
    <property type="entry name" value="PROTEASE HTPX"/>
    <property type="match status" value="1"/>
</dbReference>
<dbReference type="PANTHER" id="PTHR43221:SF1">
    <property type="entry name" value="PROTEASE HTPX"/>
    <property type="match status" value="1"/>
</dbReference>
<dbReference type="Pfam" id="PF01435">
    <property type="entry name" value="Peptidase_M48"/>
    <property type="match status" value="1"/>
</dbReference>
<dbReference type="PROSITE" id="PS00142">
    <property type="entry name" value="ZINC_PROTEASE"/>
    <property type="match status" value="1"/>
</dbReference>
<feature type="chain" id="PRO_1000098832" description="Protease HtpX homolog">
    <location>
        <begin position="1"/>
        <end position="291"/>
    </location>
</feature>
<feature type="transmembrane region" description="Helical" evidence="1">
    <location>
        <begin position="4"/>
        <end position="24"/>
    </location>
</feature>
<feature type="transmembrane region" description="Helical" evidence="1">
    <location>
        <begin position="38"/>
        <end position="58"/>
    </location>
</feature>
<feature type="transmembrane region" description="Helical" evidence="1">
    <location>
        <begin position="152"/>
        <end position="172"/>
    </location>
</feature>
<feature type="transmembrane region" description="Helical" evidence="1">
    <location>
        <begin position="199"/>
        <end position="219"/>
    </location>
</feature>
<feature type="active site" evidence="1">
    <location>
        <position position="145"/>
    </location>
</feature>
<feature type="binding site" evidence="1">
    <location>
        <position position="144"/>
    </location>
    <ligand>
        <name>Zn(2+)</name>
        <dbReference type="ChEBI" id="CHEBI:29105"/>
        <note>catalytic</note>
    </ligand>
</feature>
<feature type="binding site" evidence="1">
    <location>
        <position position="148"/>
    </location>
    <ligand>
        <name>Zn(2+)</name>
        <dbReference type="ChEBI" id="CHEBI:29105"/>
        <note>catalytic</note>
    </ligand>
</feature>
<feature type="binding site" evidence="1">
    <location>
        <position position="224"/>
    </location>
    <ligand>
        <name>Zn(2+)</name>
        <dbReference type="ChEBI" id="CHEBI:29105"/>
        <note>catalytic</note>
    </ligand>
</feature>
<organism>
    <name type="scientific">Prosthecochloris aestuarii (strain DSM 271 / SK 413)</name>
    <dbReference type="NCBI Taxonomy" id="290512"/>
    <lineage>
        <taxon>Bacteria</taxon>
        <taxon>Pseudomonadati</taxon>
        <taxon>Chlorobiota</taxon>
        <taxon>Chlorobiia</taxon>
        <taxon>Chlorobiales</taxon>
        <taxon>Chlorobiaceae</taxon>
        <taxon>Prosthecochloris</taxon>
    </lineage>
</organism>
<gene>
    <name evidence="1" type="primary">htpX</name>
    <name type="ordered locus">Paes_0986</name>
</gene>
<keyword id="KW-0997">Cell inner membrane</keyword>
<keyword id="KW-1003">Cell membrane</keyword>
<keyword id="KW-0378">Hydrolase</keyword>
<keyword id="KW-0472">Membrane</keyword>
<keyword id="KW-0479">Metal-binding</keyword>
<keyword id="KW-0482">Metalloprotease</keyword>
<keyword id="KW-0645">Protease</keyword>
<keyword id="KW-0812">Transmembrane</keyword>
<keyword id="KW-1133">Transmembrane helix</keyword>
<keyword id="KW-0862">Zinc</keyword>